<protein>
    <recommendedName>
        <fullName evidence="1">Replication factor C large subunit</fullName>
        <shortName evidence="1">RFC large subunit</shortName>
    </recommendedName>
    <alternativeName>
        <fullName evidence="1">Clamp loader large subunit</fullName>
    </alternativeName>
</protein>
<evidence type="ECO:0000255" key="1">
    <source>
        <dbReference type="HAMAP-Rule" id="MF_01508"/>
    </source>
</evidence>
<evidence type="ECO:0000256" key="2">
    <source>
        <dbReference type="SAM" id="MobiDB-lite"/>
    </source>
</evidence>
<evidence type="ECO:0000305" key="3"/>
<dbReference type="EMBL" id="AE004437">
    <property type="protein sequence ID" value="AAG19883.1"/>
    <property type="status" value="ALT_INIT"/>
    <property type="molecule type" value="Genomic_DNA"/>
</dbReference>
<dbReference type="PIR" id="G84314">
    <property type="entry name" value="G84314"/>
</dbReference>
<dbReference type="RefSeq" id="WP_012289363.1">
    <property type="nucleotide sequence ID" value="NC_002607.1"/>
</dbReference>
<dbReference type="SMR" id="Q9HPI4"/>
<dbReference type="FunCoup" id="Q9HPI4">
    <property type="interactions" value="11"/>
</dbReference>
<dbReference type="STRING" id="64091.VNG_1622G"/>
<dbReference type="PaxDb" id="64091-VNG_1622G"/>
<dbReference type="KEGG" id="hal:VNG_1622G"/>
<dbReference type="PATRIC" id="fig|64091.14.peg.1236"/>
<dbReference type="HOGENOM" id="CLU_027255_1_0_2"/>
<dbReference type="InParanoid" id="Q9HPI4"/>
<dbReference type="OrthoDB" id="8658at2157"/>
<dbReference type="PhylomeDB" id="Q9HPI4"/>
<dbReference type="Proteomes" id="UP000000554">
    <property type="component" value="Chromosome"/>
</dbReference>
<dbReference type="GO" id="GO:0005524">
    <property type="term" value="F:ATP binding"/>
    <property type="evidence" value="ECO:0007669"/>
    <property type="project" value="UniProtKB-UniRule"/>
</dbReference>
<dbReference type="GO" id="GO:0016887">
    <property type="term" value="F:ATP hydrolysis activity"/>
    <property type="evidence" value="ECO:0007669"/>
    <property type="project" value="InterPro"/>
</dbReference>
<dbReference type="GO" id="GO:0003689">
    <property type="term" value="F:DNA clamp loader activity"/>
    <property type="evidence" value="ECO:0007669"/>
    <property type="project" value="UniProtKB-UniRule"/>
</dbReference>
<dbReference type="GO" id="GO:0006260">
    <property type="term" value="P:DNA replication"/>
    <property type="evidence" value="ECO:0007669"/>
    <property type="project" value="UniProtKB-UniRule"/>
</dbReference>
<dbReference type="CDD" id="cd00009">
    <property type="entry name" value="AAA"/>
    <property type="match status" value="1"/>
</dbReference>
<dbReference type="CDD" id="cd18140">
    <property type="entry name" value="HLD_clamp_RFC"/>
    <property type="match status" value="1"/>
</dbReference>
<dbReference type="Gene3D" id="1.10.8.60">
    <property type="match status" value="1"/>
</dbReference>
<dbReference type="Gene3D" id="3.40.50.300">
    <property type="entry name" value="P-loop containing nucleotide triphosphate hydrolases"/>
    <property type="match status" value="1"/>
</dbReference>
<dbReference type="HAMAP" id="MF_01508">
    <property type="entry name" value="RfcL"/>
    <property type="match status" value="1"/>
</dbReference>
<dbReference type="InterPro" id="IPR003593">
    <property type="entry name" value="AAA+_ATPase"/>
</dbReference>
<dbReference type="InterPro" id="IPR003959">
    <property type="entry name" value="ATPase_AAA_core"/>
</dbReference>
<dbReference type="InterPro" id="IPR027417">
    <property type="entry name" value="P-loop_NTPase"/>
</dbReference>
<dbReference type="InterPro" id="IPR023935">
    <property type="entry name" value="Rep_factor-C_lsu"/>
</dbReference>
<dbReference type="InterPro" id="IPR047854">
    <property type="entry name" value="RFC_lid"/>
</dbReference>
<dbReference type="NCBIfam" id="NF003228">
    <property type="entry name" value="PRK04195.1-4"/>
    <property type="match status" value="1"/>
</dbReference>
<dbReference type="NCBIfam" id="NF003229">
    <property type="entry name" value="PRK04195.1-5"/>
    <property type="match status" value="1"/>
</dbReference>
<dbReference type="NCBIfam" id="NF003231">
    <property type="entry name" value="PRK04195.2-1"/>
    <property type="match status" value="1"/>
</dbReference>
<dbReference type="PANTHER" id="PTHR23389">
    <property type="entry name" value="CHROMOSOME TRANSMISSION FIDELITY FACTOR 18"/>
    <property type="match status" value="1"/>
</dbReference>
<dbReference type="PANTHER" id="PTHR23389:SF6">
    <property type="entry name" value="REPLICATION FACTOR C SUBUNIT 1"/>
    <property type="match status" value="1"/>
</dbReference>
<dbReference type="Pfam" id="PF00004">
    <property type="entry name" value="AAA"/>
    <property type="match status" value="1"/>
</dbReference>
<dbReference type="Pfam" id="PF21960">
    <property type="entry name" value="RCF1-5-like_lid"/>
    <property type="match status" value="1"/>
</dbReference>
<dbReference type="SMART" id="SM00382">
    <property type="entry name" value="AAA"/>
    <property type="match status" value="1"/>
</dbReference>
<dbReference type="SUPFAM" id="SSF52540">
    <property type="entry name" value="P-loop containing nucleoside triphosphate hydrolases"/>
    <property type="match status" value="1"/>
</dbReference>
<sequence length="471" mass="51446">MVDWTEKYRPASLSEVRGNDTARDALAEWAETWPDHREAVVVHGSPGIGKTSAAHALANDAGWDVVELNASDQRTADVVERVAGEAARSGTLTGGSGGRKLVLLDEADNLHGNIDRGGSAAITRLVDDAPQPIVLVANEYYEMSSSLRSACREIEFRDVSKRSIVPVLRDVCRREDVTYEEDALAAIAEQNAGDLRSAVNDLQALAEQDRTLTADDVVMGERDRTEGVFDYLDDVIATHSAREALQAAYDVDETPDDLLSWVADNVPKDYRGGELADAYEFLSNADVWLGRVRATQNYAYWRYATDNVAAGVAAARRHDHGGWTRYGPPSYWRKLGSSRATREKRDYVARHIAETAGCSMATARNDVLPFLRVLTHHCKNRELTVAMAAAYELDTEHVAFVTGSGETTNKVASIVADAEERRTDAAVDHSEGAFAGAVREDNTDEDSAADETTDGDEDTGADSQRGLDEFF</sequence>
<proteinExistence type="inferred from homology"/>
<name>RFCL_HALSA</name>
<reference key="1">
    <citation type="journal article" date="2000" name="Proc. Natl. Acad. Sci. U.S.A.">
        <title>Genome sequence of Halobacterium species NRC-1.</title>
        <authorList>
            <person name="Ng W.V."/>
            <person name="Kennedy S.P."/>
            <person name="Mahairas G.G."/>
            <person name="Berquist B."/>
            <person name="Pan M."/>
            <person name="Shukla H.D."/>
            <person name="Lasky S.R."/>
            <person name="Baliga N.S."/>
            <person name="Thorsson V."/>
            <person name="Sbrogna J."/>
            <person name="Swartzell S."/>
            <person name="Weir D."/>
            <person name="Hall J."/>
            <person name="Dahl T.A."/>
            <person name="Welti R."/>
            <person name="Goo Y.A."/>
            <person name="Leithauser B."/>
            <person name="Keller K."/>
            <person name="Cruz R."/>
            <person name="Danson M.J."/>
            <person name="Hough D.W."/>
            <person name="Maddocks D.G."/>
            <person name="Jablonski P.E."/>
            <person name="Krebs M.P."/>
            <person name="Angevine C.M."/>
            <person name="Dale H."/>
            <person name="Isenbarger T.A."/>
            <person name="Peck R.F."/>
            <person name="Pohlschroder M."/>
            <person name="Spudich J.L."/>
            <person name="Jung K.-H."/>
            <person name="Alam M."/>
            <person name="Freitas T."/>
            <person name="Hou S."/>
            <person name="Daniels C.J."/>
            <person name="Dennis P.P."/>
            <person name="Omer A.D."/>
            <person name="Ebhardt H."/>
            <person name="Lowe T.M."/>
            <person name="Liang P."/>
            <person name="Riley M."/>
            <person name="Hood L."/>
            <person name="DasSarma S."/>
        </authorList>
    </citation>
    <scope>NUCLEOTIDE SEQUENCE [LARGE SCALE GENOMIC DNA]</scope>
    <source>
        <strain>ATCC 700922 / JCM 11081 / NRC-1</strain>
    </source>
</reference>
<organism>
    <name type="scientific">Halobacterium salinarum (strain ATCC 700922 / JCM 11081 / NRC-1)</name>
    <name type="common">Halobacterium halobium</name>
    <dbReference type="NCBI Taxonomy" id="64091"/>
    <lineage>
        <taxon>Archaea</taxon>
        <taxon>Methanobacteriati</taxon>
        <taxon>Methanobacteriota</taxon>
        <taxon>Stenosarchaea group</taxon>
        <taxon>Halobacteria</taxon>
        <taxon>Halobacteriales</taxon>
        <taxon>Halobacteriaceae</taxon>
        <taxon>Halobacterium</taxon>
        <taxon>Halobacterium salinarum NRC-34001</taxon>
    </lineage>
</organism>
<feature type="chain" id="PRO_0000135950" description="Replication factor C large subunit">
    <location>
        <begin position="1"/>
        <end position="471"/>
    </location>
</feature>
<feature type="region of interest" description="Disordered" evidence="2">
    <location>
        <begin position="422"/>
        <end position="471"/>
    </location>
</feature>
<feature type="compositionally biased region" description="Basic and acidic residues" evidence="2">
    <location>
        <begin position="422"/>
        <end position="431"/>
    </location>
</feature>
<feature type="compositionally biased region" description="Acidic residues" evidence="2">
    <location>
        <begin position="442"/>
        <end position="460"/>
    </location>
</feature>
<feature type="binding site" evidence="1">
    <location>
        <begin position="44"/>
        <end position="51"/>
    </location>
    <ligand>
        <name>ATP</name>
        <dbReference type="ChEBI" id="CHEBI:30616"/>
    </ligand>
</feature>
<accession>Q9HPI4</accession>
<comment type="function">
    <text evidence="1">Part of the RFC clamp loader complex which loads the PCNA sliding clamp onto DNA.</text>
</comment>
<comment type="subunit">
    <text evidence="1">Heteromultimer composed of small subunits (RfcS) and large subunits (RfcL).</text>
</comment>
<comment type="similarity">
    <text evidence="1">Belongs to the activator 1 small subunits family. RfcL subfamily.</text>
</comment>
<comment type="sequence caution" evidence="3">
    <conflict type="erroneous initiation">
        <sequence resource="EMBL-CDS" id="AAG19883"/>
    </conflict>
</comment>
<keyword id="KW-0067">ATP-binding</keyword>
<keyword id="KW-0235">DNA replication</keyword>
<keyword id="KW-0547">Nucleotide-binding</keyword>
<keyword id="KW-1185">Reference proteome</keyword>
<gene>
    <name evidence="1" type="primary">rfcL</name>
    <name type="synonym">rfcB</name>
    <name type="ordered locus">VNG_1622G</name>
</gene>